<protein>
    <recommendedName>
        <fullName>Uncharacterized protein YbhP</fullName>
    </recommendedName>
</protein>
<name>YBHP_ECOLI</name>
<accession>P0AAW1</accession>
<accession>P75772</accession>
<dbReference type="EMBL" id="U00096">
    <property type="protein sequence ID" value="AAC73877.1"/>
    <property type="molecule type" value="Genomic_DNA"/>
</dbReference>
<dbReference type="EMBL" id="AP009048">
    <property type="protein sequence ID" value="BAA35449.1"/>
    <property type="molecule type" value="Genomic_DNA"/>
</dbReference>
<dbReference type="PIR" id="F64815">
    <property type="entry name" value="F64815"/>
</dbReference>
<dbReference type="RefSeq" id="NP_415311.1">
    <property type="nucleotide sequence ID" value="NC_000913.3"/>
</dbReference>
<dbReference type="RefSeq" id="WP_001113348.1">
    <property type="nucleotide sequence ID" value="NZ_STEB01000019.1"/>
</dbReference>
<dbReference type="SMR" id="P0AAW1"/>
<dbReference type="BioGRID" id="4261832">
    <property type="interactions" value="83"/>
</dbReference>
<dbReference type="DIP" id="DIP-48150N"/>
<dbReference type="FunCoup" id="P0AAW1">
    <property type="interactions" value="44"/>
</dbReference>
<dbReference type="IntAct" id="P0AAW1">
    <property type="interactions" value="2"/>
</dbReference>
<dbReference type="STRING" id="511145.b0790"/>
<dbReference type="jPOST" id="P0AAW1"/>
<dbReference type="PaxDb" id="511145-b0790"/>
<dbReference type="EnsemblBacteria" id="AAC73877">
    <property type="protein sequence ID" value="AAC73877"/>
    <property type="gene ID" value="b0790"/>
</dbReference>
<dbReference type="GeneID" id="945408"/>
<dbReference type="KEGG" id="ecj:JW0773"/>
<dbReference type="KEGG" id="eco:b0790"/>
<dbReference type="KEGG" id="ecoc:C3026_05000"/>
<dbReference type="PATRIC" id="fig|511145.12.peg.816"/>
<dbReference type="EchoBASE" id="EB3436"/>
<dbReference type="eggNOG" id="COG3568">
    <property type="taxonomic scope" value="Bacteria"/>
</dbReference>
<dbReference type="HOGENOM" id="CLU_060500_3_2_6"/>
<dbReference type="InParanoid" id="P0AAW1"/>
<dbReference type="OMA" id="PHGDHGN"/>
<dbReference type="OrthoDB" id="9793162at2"/>
<dbReference type="PhylomeDB" id="P0AAW1"/>
<dbReference type="BioCyc" id="EcoCyc:G6407-MONOMER"/>
<dbReference type="PRO" id="PR:P0AAW1"/>
<dbReference type="Proteomes" id="UP000000625">
    <property type="component" value="Chromosome"/>
</dbReference>
<dbReference type="GO" id="GO:0005886">
    <property type="term" value="C:plasma membrane"/>
    <property type="evidence" value="ECO:0007005"/>
    <property type="project" value="EcoCyc"/>
</dbReference>
<dbReference type="GO" id="GO:0003824">
    <property type="term" value="F:catalytic activity"/>
    <property type="evidence" value="ECO:0007669"/>
    <property type="project" value="InterPro"/>
</dbReference>
<dbReference type="FunFam" id="3.60.10.10:FF:000020">
    <property type="entry name" value="Endonuclease/exonuclease/phosphatase family protein"/>
    <property type="match status" value="1"/>
</dbReference>
<dbReference type="Gene3D" id="3.60.10.10">
    <property type="entry name" value="Endonuclease/exonuclease/phosphatase"/>
    <property type="match status" value="1"/>
</dbReference>
<dbReference type="InterPro" id="IPR036691">
    <property type="entry name" value="Endo/exonu/phosph_ase_sf"/>
</dbReference>
<dbReference type="InterPro" id="IPR005135">
    <property type="entry name" value="Endo/exonuclease/phosphatase"/>
</dbReference>
<dbReference type="InterPro" id="IPR051916">
    <property type="entry name" value="GPI-anchor_lipid_remodeler"/>
</dbReference>
<dbReference type="PANTHER" id="PTHR14859">
    <property type="entry name" value="CALCOFLUOR WHITE HYPERSENSITIVE PROTEIN PRECURSOR"/>
    <property type="match status" value="1"/>
</dbReference>
<dbReference type="PANTHER" id="PTHR14859:SF15">
    <property type="entry name" value="ENDONUCLEASE_EXONUCLEASE_PHOSPHATASE DOMAIN-CONTAINING PROTEIN"/>
    <property type="match status" value="1"/>
</dbReference>
<dbReference type="Pfam" id="PF03372">
    <property type="entry name" value="Exo_endo_phos"/>
    <property type="match status" value="1"/>
</dbReference>
<dbReference type="SUPFAM" id="SSF56219">
    <property type="entry name" value="DNase I-like"/>
    <property type="match status" value="1"/>
</dbReference>
<proteinExistence type="predicted"/>
<gene>
    <name type="primary">ybhP</name>
    <name type="ordered locus">b0790</name>
    <name type="ordered locus">JW0773</name>
</gene>
<reference key="1">
    <citation type="journal article" date="1996" name="DNA Res.">
        <title>A 718-kb DNA sequence of the Escherichia coli K-12 genome corresponding to the 12.7-28.0 min region on the linkage map.</title>
        <authorList>
            <person name="Oshima T."/>
            <person name="Aiba H."/>
            <person name="Baba T."/>
            <person name="Fujita K."/>
            <person name="Hayashi K."/>
            <person name="Honjo A."/>
            <person name="Ikemoto K."/>
            <person name="Inada T."/>
            <person name="Itoh T."/>
            <person name="Kajihara M."/>
            <person name="Kanai K."/>
            <person name="Kashimoto K."/>
            <person name="Kimura S."/>
            <person name="Kitagawa M."/>
            <person name="Makino K."/>
            <person name="Masuda S."/>
            <person name="Miki T."/>
            <person name="Mizobuchi K."/>
            <person name="Mori H."/>
            <person name="Motomura K."/>
            <person name="Nakamura Y."/>
            <person name="Nashimoto H."/>
            <person name="Nishio Y."/>
            <person name="Saito N."/>
            <person name="Sampei G."/>
            <person name="Seki Y."/>
            <person name="Tagami H."/>
            <person name="Takemoto K."/>
            <person name="Wada C."/>
            <person name="Yamamoto Y."/>
            <person name="Yano M."/>
            <person name="Horiuchi T."/>
        </authorList>
    </citation>
    <scope>NUCLEOTIDE SEQUENCE [LARGE SCALE GENOMIC DNA]</scope>
    <source>
        <strain>K12 / W3110 / ATCC 27325 / DSM 5911</strain>
    </source>
</reference>
<reference key="2">
    <citation type="journal article" date="1997" name="Science">
        <title>The complete genome sequence of Escherichia coli K-12.</title>
        <authorList>
            <person name="Blattner F.R."/>
            <person name="Plunkett G. III"/>
            <person name="Bloch C.A."/>
            <person name="Perna N.T."/>
            <person name="Burland V."/>
            <person name="Riley M."/>
            <person name="Collado-Vides J."/>
            <person name="Glasner J.D."/>
            <person name="Rode C.K."/>
            <person name="Mayhew G.F."/>
            <person name="Gregor J."/>
            <person name="Davis N.W."/>
            <person name="Kirkpatrick H.A."/>
            <person name="Goeden M.A."/>
            <person name="Rose D.J."/>
            <person name="Mau B."/>
            <person name="Shao Y."/>
        </authorList>
    </citation>
    <scope>NUCLEOTIDE SEQUENCE [LARGE SCALE GENOMIC DNA]</scope>
    <source>
        <strain>K12 / MG1655 / ATCC 47076</strain>
    </source>
</reference>
<reference key="3">
    <citation type="journal article" date="2006" name="Mol. Syst. Biol.">
        <title>Highly accurate genome sequences of Escherichia coli K-12 strains MG1655 and W3110.</title>
        <authorList>
            <person name="Hayashi K."/>
            <person name="Morooka N."/>
            <person name="Yamamoto Y."/>
            <person name="Fujita K."/>
            <person name="Isono K."/>
            <person name="Choi S."/>
            <person name="Ohtsubo E."/>
            <person name="Baba T."/>
            <person name="Wanner B.L."/>
            <person name="Mori H."/>
            <person name="Horiuchi T."/>
        </authorList>
    </citation>
    <scope>NUCLEOTIDE SEQUENCE [LARGE SCALE GENOMIC DNA]</scope>
    <source>
        <strain>K12 / W3110 / ATCC 27325 / DSM 5911</strain>
    </source>
</reference>
<feature type="chain" id="PRO_0000168716" description="Uncharacterized protein YbhP">
    <location>
        <begin position="1"/>
        <end position="253"/>
    </location>
</feature>
<sequence length="253" mass="28790">MPDQTQQFSFKVLTINIHKGFTAFNRRFILPELRDAVRTVSADIVCLQEVMGAHEVHPLHVENWPDTSHYEFLADTMWSDFAYGRNAVYPEGHHGNAVLSRYPIEHYENRDVSVDGAEKRGVLYCRIVPPMTGKAIHVMCVHLGLREAHRQAQLAMLAEWVNELPDGEPVLVAGDFNDWRQKANHPLKVQAGLDEIFTRAHGRPARTFPVQFPLLRLDRIYVKNASASAPTALPLRTWRHLSDHAPLSAEIHL</sequence>
<organism>
    <name type="scientific">Escherichia coli (strain K12)</name>
    <dbReference type="NCBI Taxonomy" id="83333"/>
    <lineage>
        <taxon>Bacteria</taxon>
        <taxon>Pseudomonadati</taxon>
        <taxon>Pseudomonadota</taxon>
        <taxon>Gammaproteobacteria</taxon>
        <taxon>Enterobacterales</taxon>
        <taxon>Enterobacteriaceae</taxon>
        <taxon>Escherichia</taxon>
    </lineage>
</organism>
<keyword id="KW-1185">Reference proteome</keyword>